<accession>A1RLV4</accession>
<proteinExistence type="inferred from homology"/>
<name>GRPE_SHESW</name>
<protein>
    <recommendedName>
        <fullName evidence="1">Protein GrpE</fullName>
    </recommendedName>
    <alternativeName>
        <fullName evidence="1">HSP-70 cofactor</fullName>
    </alternativeName>
</protein>
<feature type="chain" id="PRO_1000137627" description="Protein GrpE">
    <location>
        <begin position="1"/>
        <end position="206"/>
    </location>
</feature>
<dbReference type="EMBL" id="CP000503">
    <property type="protein sequence ID" value="ABM25649.1"/>
    <property type="molecule type" value="Genomic_DNA"/>
</dbReference>
<dbReference type="RefSeq" id="WP_011790104.1">
    <property type="nucleotide sequence ID" value="NC_008750.1"/>
</dbReference>
<dbReference type="SMR" id="A1RLV4"/>
<dbReference type="GeneID" id="67442794"/>
<dbReference type="KEGG" id="shw:Sputw3181_2832"/>
<dbReference type="HOGENOM" id="CLU_057217_6_0_6"/>
<dbReference type="Proteomes" id="UP000002597">
    <property type="component" value="Chromosome"/>
</dbReference>
<dbReference type="GO" id="GO:0005829">
    <property type="term" value="C:cytosol"/>
    <property type="evidence" value="ECO:0007669"/>
    <property type="project" value="TreeGrafter"/>
</dbReference>
<dbReference type="GO" id="GO:0000774">
    <property type="term" value="F:adenyl-nucleotide exchange factor activity"/>
    <property type="evidence" value="ECO:0007669"/>
    <property type="project" value="InterPro"/>
</dbReference>
<dbReference type="GO" id="GO:0042803">
    <property type="term" value="F:protein homodimerization activity"/>
    <property type="evidence" value="ECO:0007669"/>
    <property type="project" value="InterPro"/>
</dbReference>
<dbReference type="GO" id="GO:0051087">
    <property type="term" value="F:protein-folding chaperone binding"/>
    <property type="evidence" value="ECO:0007669"/>
    <property type="project" value="InterPro"/>
</dbReference>
<dbReference type="GO" id="GO:0051082">
    <property type="term" value="F:unfolded protein binding"/>
    <property type="evidence" value="ECO:0007669"/>
    <property type="project" value="TreeGrafter"/>
</dbReference>
<dbReference type="GO" id="GO:0006457">
    <property type="term" value="P:protein folding"/>
    <property type="evidence" value="ECO:0007669"/>
    <property type="project" value="InterPro"/>
</dbReference>
<dbReference type="CDD" id="cd00446">
    <property type="entry name" value="GrpE"/>
    <property type="match status" value="1"/>
</dbReference>
<dbReference type="FunFam" id="2.30.22.10:FF:000001">
    <property type="entry name" value="Protein GrpE"/>
    <property type="match status" value="1"/>
</dbReference>
<dbReference type="Gene3D" id="3.90.20.20">
    <property type="match status" value="1"/>
</dbReference>
<dbReference type="Gene3D" id="2.30.22.10">
    <property type="entry name" value="Head domain of nucleotide exchange factor GrpE"/>
    <property type="match status" value="1"/>
</dbReference>
<dbReference type="HAMAP" id="MF_01151">
    <property type="entry name" value="GrpE"/>
    <property type="match status" value="1"/>
</dbReference>
<dbReference type="InterPro" id="IPR000740">
    <property type="entry name" value="GrpE"/>
</dbReference>
<dbReference type="InterPro" id="IPR013805">
    <property type="entry name" value="GrpE_coiled_coil"/>
</dbReference>
<dbReference type="InterPro" id="IPR009012">
    <property type="entry name" value="GrpE_head"/>
</dbReference>
<dbReference type="NCBIfam" id="NF010737">
    <property type="entry name" value="PRK14139.1"/>
    <property type="match status" value="1"/>
</dbReference>
<dbReference type="NCBIfam" id="NF010738">
    <property type="entry name" value="PRK14140.1"/>
    <property type="match status" value="1"/>
</dbReference>
<dbReference type="NCBIfam" id="NF010748">
    <property type="entry name" value="PRK14150.1"/>
    <property type="match status" value="1"/>
</dbReference>
<dbReference type="PANTHER" id="PTHR21237">
    <property type="entry name" value="GRPE PROTEIN"/>
    <property type="match status" value="1"/>
</dbReference>
<dbReference type="PANTHER" id="PTHR21237:SF23">
    <property type="entry name" value="GRPE PROTEIN HOMOLOG, MITOCHONDRIAL"/>
    <property type="match status" value="1"/>
</dbReference>
<dbReference type="Pfam" id="PF01025">
    <property type="entry name" value="GrpE"/>
    <property type="match status" value="1"/>
</dbReference>
<dbReference type="PRINTS" id="PR00773">
    <property type="entry name" value="GRPEPROTEIN"/>
</dbReference>
<dbReference type="SUPFAM" id="SSF58014">
    <property type="entry name" value="Coiled-coil domain of nucleotide exchange factor GrpE"/>
    <property type="match status" value="1"/>
</dbReference>
<dbReference type="SUPFAM" id="SSF51064">
    <property type="entry name" value="Head domain of nucleotide exchange factor GrpE"/>
    <property type="match status" value="1"/>
</dbReference>
<dbReference type="PROSITE" id="PS01071">
    <property type="entry name" value="GRPE"/>
    <property type="match status" value="1"/>
</dbReference>
<comment type="function">
    <text evidence="1">Participates actively in the response to hyperosmotic and heat shock by preventing the aggregation of stress-denatured proteins, in association with DnaK and GrpE. It is the nucleotide exchange factor for DnaK and may function as a thermosensor. Unfolded proteins bind initially to DnaJ; upon interaction with the DnaJ-bound protein, DnaK hydrolyzes its bound ATP, resulting in the formation of a stable complex. GrpE releases ADP from DnaK; ATP binding to DnaK triggers the release of the substrate protein, thus completing the reaction cycle. Several rounds of ATP-dependent interactions between DnaJ, DnaK and GrpE are required for fully efficient folding.</text>
</comment>
<comment type="subunit">
    <text evidence="1">Homodimer.</text>
</comment>
<comment type="subcellular location">
    <subcellularLocation>
        <location evidence="1">Cytoplasm</location>
    </subcellularLocation>
</comment>
<comment type="similarity">
    <text evidence="1">Belongs to the GrpE family.</text>
</comment>
<gene>
    <name evidence="1" type="primary">grpE</name>
    <name type="ordered locus">Sputw3181_2832</name>
</gene>
<reference key="1">
    <citation type="submission" date="2006-12" db="EMBL/GenBank/DDBJ databases">
        <title>Complete sequence of Shewanella sp. W3-18-1.</title>
        <authorList>
            <consortium name="US DOE Joint Genome Institute"/>
            <person name="Copeland A."/>
            <person name="Lucas S."/>
            <person name="Lapidus A."/>
            <person name="Barry K."/>
            <person name="Detter J.C."/>
            <person name="Glavina del Rio T."/>
            <person name="Hammon N."/>
            <person name="Israni S."/>
            <person name="Dalin E."/>
            <person name="Tice H."/>
            <person name="Pitluck S."/>
            <person name="Chain P."/>
            <person name="Malfatti S."/>
            <person name="Shin M."/>
            <person name="Vergez L."/>
            <person name="Schmutz J."/>
            <person name="Larimer F."/>
            <person name="Land M."/>
            <person name="Hauser L."/>
            <person name="Kyrpides N."/>
            <person name="Lykidis A."/>
            <person name="Tiedje J."/>
            <person name="Richardson P."/>
        </authorList>
    </citation>
    <scope>NUCLEOTIDE SEQUENCE [LARGE SCALE GENOMIC DNA]</scope>
    <source>
        <strain>W3-18-1</strain>
    </source>
</reference>
<keyword id="KW-0143">Chaperone</keyword>
<keyword id="KW-0963">Cytoplasm</keyword>
<keyword id="KW-0346">Stress response</keyword>
<evidence type="ECO:0000255" key="1">
    <source>
        <dbReference type="HAMAP-Rule" id="MF_01151"/>
    </source>
</evidence>
<organism>
    <name type="scientific">Shewanella sp. (strain W3-18-1)</name>
    <dbReference type="NCBI Taxonomy" id="351745"/>
    <lineage>
        <taxon>Bacteria</taxon>
        <taxon>Pseudomonadati</taxon>
        <taxon>Pseudomonadota</taxon>
        <taxon>Gammaproteobacteria</taxon>
        <taxon>Alteromonadales</taxon>
        <taxon>Shewanellaceae</taxon>
        <taxon>Shewanella</taxon>
    </lineage>
</organism>
<sequence length="206" mass="22609">MSNESIKAEQDLIQEGVESEVSTAEASLVDELTQANFRIEELEQLLADALAKVEEQKDSVIRAAAEVDNIRRRAAMDVEKANKFALEKFANELLPVLDNMERALMGTNPEDEATKAIYQGVELTQKSLLTAVAKFGVKQIDPQGESFNPDQHQAIGMQPSADFPANTVMLVMQKGYELNSRLLRPAMVMVSQGGPSQETATIDIEA</sequence>